<evidence type="ECO:0000255" key="1">
    <source>
        <dbReference type="HAMAP-Rule" id="MF_01522"/>
    </source>
</evidence>
<evidence type="ECO:0000305" key="2"/>
<name>KUP1_LACAC</name>
<organism>
    <name type="scientific">Lactobacillus acidophilus (strain ATCC 700396 / NCK56 / N2 / NCFM)</name>
    <dbReference type="NCBI Taxonomy" id="272621"/>
    <lineage>
        <taxon>Bacteria</taxon>
        <taxon>Bacillati</taxon>
        <taxon>Bacillota</taxon>
        <taxon>Bacilli</taxon>
        <taxon>Lactobacillales</taxon>
        <taxon>Lactobacillaceae</taxon>
        <taxon>Lactobacillus</taxon>
    </lineage>
</organism>
<gene>
    <name evidence="1" type="primary">kup1</name>
    <name type="ordered locus">LBA0166</name>
</gene>
<dbReference type="EMBL" id="CP000033">
    <property type="protein sequence ID" value="AAV42067.1"/>
    <property type="status" value="ALT_FRAME"/>
    <property type="molecule type" value="Genomic_DNA"/>
</dbReference>
<dbReference type="RefSeq" id="YP_193098.1">
    <property type="nucleotide sequence ID" value="NC_006814.3"/>
</dbReference>
<dbReference type="KEGG" id="lac:LBA0166"/>
<dbReference type="PATRIC" id="fig|272621.13.peg.161"/>
<dbReference type="eggNOG" id="COG3158">
    <property type="taxonomic scope" value="Bacteria"/>
</dbReference>
<dbReference type="HOGENOM" id="CLU_008142_4_1_9"/>
<dbReference type="OrthoDB" id="9805577at2"/>
<dbReference type="Proteomes" id="UP000006381">
    <property type="component" value="Chromosome"/>
</dbReference>
<dbReference type="GO" id="GO:0005886">
    <property type="term" value="C:plasma membrane"/>
    <property type="evidence" value="ECO:0007669"/>
    <property type="project" value="UniProtKB-SubCell"/>
</dbReference>
<dbReference type="GO" id="GO:0015079">
    <property type="term" value="F:potassium ion transmembrane transporter activity"/>
    <property type="evidence" value="ECO:0007669"/>
    <property type="project" value="UniProtKB-UniRule"/>
</dbReference>
<dbReference type="GO" id="GO:0015293">
    <property type="term" value="F:symporter activity"/>
    <property type="evidence" value="ECO:0007669"/>
    <property type="project" value="UniProtKB-UniRule"/>
</dbReference>
<dbReference type="HAMAP" id="MF_01522">
    <property type="entry name" value="Kup"/>
    <property type="match status" value="1"/>
</dbReference>
<dbReference type="InterPro" id="IPR003855">
    <property type="entry name" value="K+_transporter"/>
</dbReference>
<dbReference type="InterPro" id="IPR053952">
    <property type="entry name" value="K_trans_C"/>
</dbReference>
<dbReference type="InterPro" id="IPR053951">
    <property type="entry name" value="K_trans_N"/>
</dbReference>
<dbReference type="InterPro" id="IPR023051">
    <property type="entry name" value="Kup"/>
</dbReference>
<dbReference type="PANTHER" id="PTHR30540:SF83">
    <property type="entry name" value="K+ POTASSIUM TRANSPORTER"/>
    <property type="match status" value="1"/>
</dbReference>
<dbReference type="PANTHER" id="PTHR30540">
    <property type="entry name" value="OSMOTIC STRESS POTASSIUM TRANSPORTER"/>
    <property type="match status" value="1"/>
</dbReference>
<dbReference type="Pfam" id="PF02705">
    <property type="entry name" value="K_trans"/>
    <property type="match status" value="1"/>
</dbReference>
<dbReference type="Pfam" id="PF22776">
    <property type="entry name" value="K_trans_C"/>
    <property type="match status" value="1"/>
</dbReference>
<keyword id="KW-1003">Cell membrane</keyword>
<keyword id="KW-0406">Ion transport</keyword>
<keyword id="KW-0472">Membrane</keyword>
<keyword id="KW-0630">Potassium</keyword>
<keyword id="KW-0633">Potassium transport</keyword>
<keyword id="KW-1185">Reference proteome</keyword>
<keyword id="KW-0769">Symport</keyword>
<keyword id="KW-0812">Transmembrane</keyword>
<keyword id="KW-1133">Transmembrane helix</keyword>
<keyword id="KW-0813">Transport</keyword>
<protein>
    <recommendedName>
        <fullName evidence="1">Probable potassium transport system protein Kup 1</fullName>
    </recommendedName>
</protein>
<feature type="chain" id="PRO_0000209020" description="Probable potassium transport system protein Kup 1">
    <location>
        <begin position="1"/>
        <end position="650"/>
    </location>
</feature>
<feature type="transmembrane region" description="Helical" evidence="1">
    <location>
        <begin position="12"/>
        <end position="32"/>
    </location>
</feature>
<feature type="transmembrane region" description="Helical" evidence="1">
    <location>
        <begin position="54"/>
        <end position="74"/>
    </location>
</feature>
<feature type="transmembrane region" description="Helical" evidence="1">
    <location>
        <begin position="97"/>
        <end position="117"/>
    </location>
</feature>
<feature type="transmembrane region" description="Helical" evidence="1">
    <location>
        <begin position="139"/>
        <end position="159"/>
    </location>
</feature>
<feature type="transmembrane region" description="Helical" evidence="1">
    <location>
        <begin position="170"/>
        <end position="190"/>
    </location>
</feature>
<feature type="transmembrane region" description="Helical" evidence="1">
    <location>
        <begin position="216"/>
        <end position="236"/>
    </location>
</feature>
<feature type="transmembrane region" description="Helical" evidence="1">
    <location>
        <begin position="249"/>
        <end position="269"/>
    </location>
</feature>
<feature type="transmembrane region" description="Helical" evidence="1">
    <location>
        <begin position="295"/>
        <end position="315"/>
    </location>
</feature>
<feature type="transmembrane region" description="Helical" evidence="1">
    <location>
        <begin position="344"/>
        <end position="364"/>
    </location>
</feature>
<feature type="transmembrane region" description="Helical" evidence="1">
    <location>
        <begin position="375"/>
        <end position="395"/>
    </location>
</feature>
<feature type="transmembrane region" description="Helical" evidence="1">
    <location>
        <begin position="400"/>
        <end position="420"/>
    </location>
</feature>
<feature type="transmembrane region" description="Helical" evidence="1">
    <location>
        <begin position="428"/>
        <end position="448"/>
    </location>
</feature>
<reference key="1">
    <citation type="journal article" date="2005" name="Proc. Natl. Acad. Sci. U.S.A.">
        <title>Complete genome sequence of the probiotic lactic acid bacterium Lactobacillus acidophilus NCFM.</title>
        <authorList>
            <person name="Altermann E."/>
            <person name="Russell W.M."/>
            <person name="Azcarate-Peril M.A."/>
            <person name="Barrangou R."/>
            <person name="Buck B.L."/>
            <person name="McAuliffe O."/>
            <person name="Souther N."/>
            <person name="Dobson A."/>
            <person name="Duong T."/>
            <person name="Callanan M."/>
            <person name="Lick S."/>
            <person name="Hamrick A."/>
            <person name="Cano R."/>
            <person name="Klaenhammer T.R."/>
        </authorList>
    </citation>
    <scope>NUCLEOTIDE SEQUENCE [LARGE SCALE GENOMIC DNA]</scope>
    <source>
        <strain>ATCC 700396 / NCK56 / N2 / NCFM</strain>
    </source>
</reference>
<proteinExistence type="inferred from homology"/>
<comment type="function">
    <text evidence="1">Transport of potassium into the cell. Likely operates as a K(+):H(+) symporter.</text>
</comment>
<comment type="catalytic activity">
    <reaction evidence="1">
        <text>K(+)(in) + H(+)(in) = K(+)(out) + H(+)(out)</text>
        <dbReference type="Rhea" id="RHEA:28490"/>
        <dbReference type="ChEBI" id="CHEBI:15378"/>
        <dbReference type="ChEBI" id="CHEBI:29103"/>
    </reaction>
    <physiologicalReaction direction="right-to-left" evidence="1">
        <dbReference type="Rhea" id="RHEA:28492"/>
    </physiologicalReaction>
</comment>
<comment type="subcellular location">
    <subcellularLocation>
        <location evidence="1">Cell membrane</location>
        <topology evidence="1">Multi-pass membrane protein</topology>
    </subcellularLocation>
</comment>
<comment type="similarity">
    <text evidence="1">Belongs to the HAK/KUP transporter (TC 2.A.72) family.</text>
</comment>
<comment type="sequence caution" evidence="2">
    <conflict type="frameshift">
        <sequence resource="EMBL-CDS" id="AAV42067"/>
    </conflict>
</comment>
<sequence>MNNKSKRMSAAGLLIAIGIVYGDIGTSPLYVMKSIVKAMGGIGNVNREFIIGSISLVLWTVTLLTTLQTVIIALKATNHGEGGIFALYTLVRKRAKWLVLPALIGGAAILADGTLTPAVTVTTAIEGLKGLQLGGGVPVSSQSMVIAITVLILLVLFSIQKMGTSIIGKAFGPIMFVWFTFLGVIGLINMSGDWSILQAINPVYAIKLLFSPYNKAGIFILGSIFLATTGAEALYSDVGHVGKKNIIGSWPFVFVCLSLNYFGQGVWILNNPTYRPADGGVLNPFYEMIPSDFRLAAIILATIAAVIASQALITGSFTLVAEASGLKFLPRMKIDYPSTEKGQIYIPSINKGICVATIAIVLYFQTSAHMEAAYGLSITISMLMTTILLYEWLAMKKVNPVWNWIFLIFFGVLDIMFMISSLTKFTHGGYVSLFIAGAIGFIMYVWYYGNKIRDKREARNAYVRLDEYTDMLTNLSHDENYPTYATNLVYMANVKYNKFIKREILYSILDKRPKRAKAYWFVTVNVTNEPFTAEYAVNTYGTKNVINIQLYLGFKKQTSVNVYIRQIVHDLIADGTIEPQPQEYTTTPGRDVGDFSFVIVNDVISPQTQLIGYEKWLVEARVRLQNLSSNPASWFGLEYADTVIERVPLS</sequence>
<accession>Q5FMK7</accession>